<accession>A0PM84</accession>
<reference key="1">
    <citation type="journal article" date="2007" name="Genome Res.">
        <title>Reductive evolution and niche adaptation inferred from the genome of Mycobacterium ulcerans, the causative agent of Buruli ulcer.</title>
        <authorList>
            <person name="Stinear T.P."/>
            <person name="Seemann T."/>
            <person name="Pidot S."/>
            <person name="Frigui W."/>
            <person name="Reysset G."/>
            <person name="Garnier T."/>
            <person name="Meurice G."/>
            <person name="Simon D."/>
            <person name="Bouchier C."/>
            <person name="Ma L."/>
            <person name="Tichit M."/>
            <person name="Porter J.L."/>
            <person name="Ryan J."/>
            <person name="Johnson P.D.R."/>
            <person name="Davies J.K."/>
            <person name="Jenkin G.A."/>
            <person name="Small P.L.C."/>
            <person name="Jones L.M."/>
            <person name="Tekaia F."/>
            <person name="Laval F."/>
            <person name="Daffe M."/>
            <person name="Parkhill J."/>
            <person name="Cole S.T."/>
        </authorList>
    </citation>
    <scope>NUCLEOTIDE SEQUENCE [LARGE SCALE GENOMIC DNA]</scope>
    <source>
        <strain>Agy99</strain>
    </source>
</reference>
<evidence type="ECO:0000255" key="1">
    <source>
        <dbReference type="HAMAP-Rule" id="MF_01341"/>
    </source>
</evidence>
<evidence type="ECO:0000256" key="2">
    <source>
        <dbReference type="SAM" id="MobiDB-lite"/>
    </source>
</evidence>
<evidence type="ECO:0000305" key="3"/>
<dbReference type="EMBL" id="CP000325">
    <property type="protein sequence ID" value="ABL03453.1"/>
    <property type="molecule type" value="Genomic_DNA"/>
</dbReference>
<dbReference type="RefSeq" id="WP_011739078.1">
    <property type="nucleotide sequence ID" value="NC_008611.1"/>
</dbReference>
<dbReference type="SMR" id="A0PM84"/>
<dbReference type="GeneID" id="93438578"/>
<dbReference type="KEGG" id="mul:MUL_0813"/>
<dbReference type="eggNOG" id="COG0200">
    <property type="taxonomic scope" value="Bacteria"/>
</dbReference>
<dbReference type="HOGENOM" id="CLU_055188_4_1_11"/>
<dbReference type="Proteomes" id="UP000000765">
    <property type="component" value="Chromosome"/>
</dbReference>
<dbReference type="GO" id="GO:0022625">
    <property type="term" value="C:cytosolic large ribosomal subunit"/>
    <property type="evidence" value="ECO:0007669"/>
    <property type="project" value="TreeGrafter"/>
</dbReference>
<dbReference type="GO" id="GO:0019843">
    <property type="term" value="F:rRNA binding"/>
    <property type="evidence" value="ECO:0007669"/>
    <property type="project" value="UniProtKB-UniRule"/>
</dbReference>
<dbReference type="GO" id="GO:0003735">
    <property type="term" value="F:structural constituent of ribosome"/>
    <property type="evidence" value="ECO:0007669"/>
    <property type="project" value="InterPro"/>
</dbReference>
<dbReference type="GO" id="GO:0006412">
    <property type="term" value="P:translation"/>
    <property type="evidence" value="ECO:0007669"/>
    <property type="project" value="UniProtKB-UniRule"/>
</dbReference>
<dbReference type="FunFam" id="3.100.10.10:FF:000005">
    <property type="entry name" value="50S ribosomal protein L15"/>
    <property type="match status" value="1"/>
</dbReference>
<dbReference type="Gene3D" id="3.100.10.10">
    <property type="match status" value="1"/>
</dbReference>
<dbReference type="HAMAP" id="MF_01341">
    <property type="entry name" value="Ribosomal_uL15"/>
    <property type="match status" value="1"/>
</dbReference>
<dbReference type="InterPro" id="IPR030878">
    <property type="entry name" value="Ribosomal_uL15"/>
</dbReference>
<dbReference type="InterPro" id="IPR021131">
    <property type="entry name" value="Ribosomal_uL15/eL18"/>
</dbReference>
<dbReference type="InterPro" id="IPR036227">
    <property type="entry name" value="Ribosomal_uL15/eL18_sf"/>
</dbReference>
<dbReference type="InterPro" id="IPR005749">
    <property type="entry name" value="Ribosomal_uL15_bac-type"/>
</dbReference>
<dbReference type="InterPro" id="IPR001196">
    <property type="entry name" value="Ribosomal_uL15_CS"/>
</dbReference>
<dbReference type="NCBIfam" id="TIGR01071">
    <property type="entry name" value="rplO_bact"/>
    <property type="match status" value="1"/>
</dbReference>
<dbReference type="PANTHER" id="PTHR12934">
    <property type="entry name" value="50S RIBOSOMAL PROTEIN L15"/>
    <property type="match status" value="1"/>
</dbReference>
<dbReference type="PANTHER" id="PTHR12934:SF11">
    <property type="entry name" value="LARGE RIBOSOMAL SUBUNIT PROTEIN UL15M"/>
    <property type="match status" value="1"/>
</dbReference>
<dbReference type="Pfam" id="PF00828">
    <property type="entry name" value="Ribosomal_L27A"/>
    <property type="match status" value="1"/>
</dbReference>
<dbReference type="SUPFAM" id="SSF52080">
    <property type="entry name" value="Ribosomal proteins L15p and L18e"/>
    <property type="match status" value="1"/>
</dbReference>
<dbReference type="PROSITE" id="PS00475">
    <property type="entry name" value="RIBOSOMAL_L15"/>
    <property type="match status" value="1"/>
</dbReference>
<proteinExistence type="inferred from homology"/>
<name>RL15_MYCUA</name>
<sequence length="146" mass="15636">MTIKLHDLRPAPGSKTPRTRVGRGEGSKGKTAGRGTKGTKARKQVPTTFEGGQMPIHMRLPKLKGFRNRFRTEYEIVNVGDIARLFPEGGTVGVDELVAKGAVRKNSLVKVLGDGKLTVKVDITAHKFSGSAREQITAAGGSVTEL</sequence>
<protein>
    <recommendedName>
        <fullName evidence="1">Large ribosomal subunit protein uL15</fullName>
    </recommendedName>
    <alternativeName>
        <fullName evidence="3">50S ribosomal protein L15</fullName>
    </alternativeName>
</protein>
<comment type="function">
    <text evidence="1">Binds to the 23S rRNA.</text>
</comment>
<comment type="subunit">
    <text evidence="1">Part of the 50S ribosomal subunit.</text>
</comment>
<comment type="similarity">
    <text evidence="1">Belongs to the universal ribosomal protein uL15 family.</text>
</comment>
<gene>
    <name evidence="1" type="primary">rplO</name>
    <name type="ordered locus">MUL_0813</name>
</gene>
<feature type="chain" id="PRO_1000054499" description="Large ribosomal subunit protein uL15">
    <location>
        <begin position="1"/>
        <end position="146"/>
    </location>
</feature>
<feature type="region of interest" description="Disordered" evidence="2">
    <location>
        <begin position="1"/>
        <end position="54"/>
    </location>
</feature>
<organism>
    <name type="scientific">Mycobacterium ulcerans (strain Agy99)</name>
    <dbReference type="NCBI Taxonomy" id="362242"/>
    <lineage>
        <taxon>Bacteria</taxon>
        <taxon>Bacillati</taxon>
        <taxon>Actinomycetota</taxon>
        <taxon>Actinomycetes</taxon>
        <taxon>Mycobacteriales</taxon>
        <taxon>Mycobacteriaceae</taxon>
        <taxon>Mycobacterium</taxon>
        <taxon>Mycobacterium ulcerans group</taxon>
    </lineage>
</organism>
<keyword id="KW-0687">Ribonucleoprotein</keyword>
<keyword id="KW-0689">Ribosomal protein</keyword>
<keyword id="KW-0694">RNA-binding</keyword>
<keyword id="KW-0699">rRNA-binding</keyword>